<accession>Q54GY9</accession>
<comment type="subcellular location">
    <subcellularLocation>
        <location evidence="2">Membrane</location>
        <topology evidence="2">Multi-pass membrane protein</topology>
    </subcellularLocation>
</comment>
<organism>
    <name type="scientific">Dictyostelium discoideum</name>
    <name type="common">Social amoeba</name>
    <dbReference type="NCBI Taxonomy" id="44689"/>
    <lineage>
        <taxon>Eukaryota</taxon>
        <taxon>Amoebozoa</taxon>
        <taxon>Evosea</taxon>
        <taxon>Eumycetozoa</taxon>
        <taxon>Dictyostelia</taxon>
        <taxon>Dictyosteliales</taxon>
        <taxon>Dictyosteliaceae</taxon>
        <taxon>Dictyostelium</taxon>
    </lineage>
</organism>
<keyword id="KW-0472">Membrane</keyword>
<keyword id="KW-1185">Reference proteome</keyword>
<keyword id="KW-0812">Transmembrane</keyword>
<keyword id="KW-1133">Transmembrane helix</keyword>
<dbReference type="EMBL" id="AAFI02000149">
    <property type="protein sequence ID" value="EAL62513.1"/>
    <property type="molecule type" value="Genomic_DNA"/>
</dbReference>
<dbReference type="RefSeq" id="XP_636018.1">
    <property type="nucleotide sequence ID" value="XM_630926.1"/>
</dbReference>
<dbReference type="SMR" id="Q54GY9"/>
<dbReference type="FunCoup" id="Q54GY9">
    <property type="interactions" value="435"/>
</dbReference>
<dbReference type="PaxDb" id="44689-DDB0188591"/>
<dbReference type="EnsemblProtists" id="EAL62513">
    <property type="protein sequence ID" value="EAL62513"/>
    <property type="gene ID" value="DDB_G0289825"/>
</dbReference>
<dbReference type="GeneID" id="8627344"/>
<dbReference type="KEGG" id="ddi:DDB_G0289825"/>
<dbReference type="dictyBase" id="DDB_G0289825"/>
<dbReference type="VEuPathDB" id="AmoebaDB:DDB_G0289825"/>
<dbReference type="HOGENOM" id="CLU_1753104_0_0_1"/>
<dbReference type="InParanoid" id="Q54GY9"/>
<dbReference type="PRO" id="PR:Q54GY9"/>
<dbReference type="Proteomes" id="UP000002195">
    <property type="component" value="Chromosome 5"/>
</dbReference>
<dbReference type="GO" id="GO:0016020">
    <property type="term" value="C:membrane"/>
    <property type="evidence" value="ECO:0007669"/>
    <property type="project" value="UniProtKB-SubCell"/>
</dbReference>
<protein>
    <recommendedName>
        <fullName>Putative uncharacterized protein DDB_G0289825</fullName>
    </recommendedName>
</protein>
<feature type="chain" id="PRO_0000346939" description="Putative uncharacterized protein DDB_G0289825">
    <location>
        <begin position="1"/>
        <end position="149"/>
    </location>
</feature>
<feature type="transmembrane region" description="Helical" evidence="1">
    <location>
        <begin position="91"/>
        <end position="111"/>
    </location>
</feature>
<feature type="transmembrane region" description="Helical" evidence="1">
    <location>
        <begin position="122"/>
        <end position="142"/>
    </location>
</feature>
<gene>
    <name type="ORF">DDB_G0289825</name>
</gene>
<reference key="1">
    <citation type="journal article" date="2005" name="Nature">
        <title>The genome of the social amoeba Dictyostelium discoideum.</title>
        <authorList>
            <person name="Eichinger L."/>
            <person name="Pachebat J.A."/>
            <person name="Gloeckner G."/>
            <person name="Rajandream M.A."/>
            <person name="Sucgang R."/>
            <person name="Berriman M."/>
            <person name="Song J."/>
            <person name="Olsen R."/>
            <person name="Szafranski K."/>
            <person name="Xu Q."/>
            <person name="Tunggal B."/>
            <person name="Kummerfeld S."/>
            <person name="Madera M."/>
            <person name="Konfortov B.A."/>
            <person name="Rivero F."/>
            <person name="Bankier A.T."/>
            <person name="Lehmann R."/>
            <person name="Hamlin N."/>
            <person name="Davies R."/>
            <person name="Gaudet P."/>
            <person name="Fey P."/>
            <person name="Pilcher K."/>
            <person name="Chen G."/>
            <person name="Saunders D."/>
            <person name="Sodergren E.J."/>
            <person name="Davis P."/>
            <person name="Kerhornou A."/>
            <person name="Nie X."/>
            <person name="Hall N."/>
            <person name="Anjard C."/>
            <person name="Hemphill L."/>
            <person name="Bason N."/>
            <person name="Farbrother P."/>
            <person name="Desany B."/>
            <person name="Just E."/>
            <person name="Morio T."/>
            <person name="Rost R."/>
            <person name="Churcher C.M."/>
            <person name="Cooper J."/>
            <person name="Haydock S."/>
            <person name="van Driessche N."/>
            <person name="Cronin A."/>
            <person name="Goodhead I."/>
            <person name="Muzny D.M."/>
            <person name="Mourier T."/>
            <person name="Pain A."/>
            <person name="Lu M."/>
            <person name="Harper D."/>
            <person name="Lindsay R."/>
            <person name="Hauser H."/>
            <person name="James K.D."/>
            <person name="Quiles M."/>
            <person name="Madan Babu M."/>
            <person name="Saito T."/>
            <person name="Buchrieser C."/>
            <person name="Wardroper A."/>
            <person name="Felder M."/>
            <person name="Thangavelu M."/>
            <person name="Johnson D."/>
            <person name="Knights A."/>
            <person name="Loulseged H."/>
            <person name="Mungall K.L."/>
            <person name="Oliver K."/>
            <person name="Price C."/>
            <person name="Quail M.A."/>
            <person name="Urushihara H."/>
            <person name="Hernandez J."/>
            <person name="Rabbinowitsch E."/>
            <person name="Steffen D."/>
            <person name="Sanders M."/>
            <person name="Ma J."/>
            <person name="Kohara Y."/>
            <person name="Sharp S."/>
            <person name="Simmonds M.N."/>
            <person name="Spiegler S."/>
            <person name="Tivey A."/>
            <person name="Sugano S."/>
            <person name="White B."/>
            <person name="Walker D."/>
            <person name="Woodward J.R."/>
            <person name="Winckler T."/>
            <person name="Tanaka Y."/>
            <person name="Shaulsky G."/>
            <person name="Schleicher M."/>
            <person name="Weinstock G.M."/>
            <person name="Rosenthal A."/>
            <person name="Cox E.C."/>
            <person name="Chisholm R.L."/>
            <person name="Gibbs R.A."/>
            <person name="Loomis W.F."/>
            <person name="Platzer M."/>
            <person name="Kay R.R."/>
            <person name="Williams J.G."/>
            <person name="Dear P.H."/>
            <person name="Noegel A.A."/>
            <person name="Barrell B.G."/>
            <person name="Kuspa A."/>
        </authorList>
    </citation>
    <scope>NUCLEOTIDE SEQUENCE [LARGE SCALE GENOMIC DNA]</scope>
    <source>
        <strain>AX4</strain>
    </source>
</reference>
<name>Y8591_DICDI</name>
<proteinExistence type="predicted"/>
<evidence type="ECO:0000255" key="1"/>
<evidence type="ECO:0000305" key="2"/>
<sequence length="149" mass="17016">METQTSFINDGPKIHSNKLNQLDFLSGNNNNNRDNYYNNKNDKNSITHFNNYNYSGHSSYDNESARLIPISGNFKNESINKQRRKVVIARIFILLCLLICLGLALMGLFHYLITNDKRLDSISILFWSGSAFLIIVLIICLLARHCGSD</sequence>